<organism>
    <name type="scientific">Picea abies</name>
    <name type="common">Norway spruce</name>
    <name type="synonym">Picea excelsa</name>
    <dbReference type="NCBI Taxonomy" id="3329"/>
    <lineage>
        <taxon>Eukaryota</taxon>
        <taxon>Viridiplantae</taxon>
        <taxon>Streptophyta</taxon>
        <taxon>Embryophyta</taxon>
        <taxon>Tracheophyta</taxon>
        <taxon>Spermatophyta</taxon>
        <taxon>Pinopsida</taxon>
        <taxon>Pinidae</taxon>
        <taxon>Conifers I</taxon>
        <taxon>Pinales</taxon>
        <taxon>Pinaceae</taxon>
        <taxon>Picea</taxon>
    </lineage>
</organism>
<feature type="transit peptide" description="Chloroplast" evidence="5">
    <location>
        <begin position="1"/>
        <end position="68"/>
    </location>
</feature>
<feature type="chain" id="PRO_0000348953" description="Bifunctional isopimaradiene synthase, chloroplastic">
    <location>
        <begin position="69"/>
        <end position="867"/>
    </location>
</feature>
<feature type="short sequence motif" description="DXDD motif" evidence="7">
    <location>
        <begin position="400"/>
        <end position="403"/>
    </location>
</feature>
<feature type="short sequence motif" description="DDXXD motif" evidence="7">
    <location>
        <begin position="619"/>
        <end position="623"/>
    </location>
</feature>
<feature type="binding site" evidence="3">
    <location>
        <position position="267"/>
    </location>
    <ligand>
        <name>substrate</name>
    </ligand>
</feature>
<feature type="binding site" evidence="2">
    <location>
        <position position="400"/>
    </location>
    <ligand>
        <name>Mg(2+)</name>
        <dbReference type="ChEBI" id="CHEBI:18420"/>
        <label>4</label>
    </ligand>
</feature>
<feature type="binding site" evidence="2">
    <location>
        <position position="402"/>
    </location>
    <ligand>
        <name>Mg(2+)</name>
        <dbReference type="ChEBI" id="CHEBI:18420"/>
        <label>4</label>
    </ligand>
</feature>
<feature type="binding site" evidence="3">
    <location>
        <position position="487"/>
    </location>
    <ligand>
        <name>substrate</name>
    </ligand>
</feature>
<feature type="binding site" evidence="4">
    <location>
        <position position="619"/>
    </location>
    <ligand>
        <name>Mg(2+)</name>
        <dbReference type="ChEBI" id="CHEBI:18420"/>
        <label>1</label>
    </ligand>
</feature>
<feature type="binding site" evidence="4">
    <location>
        <position position="619"/>
    </location>
    <ligand>
        <name>Mg(2+)</name>
        <dbReference type="ChEBI" id="CHEBI:18420"/>
        <label>2</label>
    </ligand>
</feature>
<feature type="binding site" evidence="4">
    <location>
        <position position="623"/>
    </location>
    <ligand>
        <name>Mg(2+)</name>
        <dbReference type="ChEBI" id="CHEBI:18420"/>
        <label>1</label>
    </ligand>
</feature>
<feature type="binding site" evidence="4">
    <location>
        <position position="623"/>
    </location>
    <ligand>
        <name>Mg(2+)</name>
        <dbReference type="ChEBI" id="CHEBI:18420"/>
        <label>2</label>
    </ligand>
</feature>
<feature type="binding site" evidence="4">
    <location>
        <position position="763"/>
    </location>
    <ligand>
        <name>Mg(2+)</name>
        <dbReference type="ChEBI" id="CHEBI:18420"/>
        <label>3</label>
    </ligand>
</feature>
<feature type="binding site" evidence="4">
    <location>
        <position position="767"/>
    </location>
    <ligand>
        <name>Mg(2+)</name>
        <dbReference type="ChEBI" id="CHEBI:18420"/>
        <label>3</label>
    </ligand>
</feature>
<feature type="binding site" evidence="4">
    <location>
        <position position="771"/>
    </location>
    <ligand>
        <name>Mg(2+)</name>
        <dbReference type="ChEBI" id="CHEBI:18420"/>
        <label>3</label>
    </ligand>
</feature>
<dbReference type="EC" id="4.2.3.44"/>
<dbReference type="EC" id="5.5.1.12"/>
<dbReference type="EMBL" id="AY473620">
    <property type="protein sequence ID" value="AAS47690.2"/>
    <property type="molecule type" value="mRNA"/>
</dbReference>
<dbReference type="SMR" id="Q675L5"/>
<dbReference type="KEGG" id="ag:AAS47690"/>
<dbReference type="BioCyc" id="MetaCyc:MONOMER-12744"/>
<dbReference type="BRENDA" id="4.2.3.35">
    <property type="organism ID" value="4815"/>
</dbReference>
<dbReference type="BRENDA" id="4.2.3.44">
    <property type="organism ID" value="4815"/>
</dbReference>
<dbReference type="BRENDA" id="5.5.1.12">
    <property type="organism ID" value="4815"/>
</dbReference>
<dbReference type="UniPathway" id="UPA00924"/>
<dbReference type="GO" id="GO:0009507">
    <property type="term" value="C:chloroplast"/>
    <property type="evidence" value="ECO:0007669"/>
    <property type="project" value="UniProtKB-SubCell"/>
</dbReference>
<dbReference type="GO" id="GO:0050559">
    <property type="term" value="F:copalyl diphosphate synthase activity"/>
    <property type="evidence" value="ECO:0007669"/>
    <property type="project" value="UniProtKB-EC"/>
</dbReference>
<dbReference type="GO" id="GO:0000287">
    <property type="term" value="F:magnesium ion binding"/>
    <property type="evidence" value="ECO:0007669"/>
    <property type="project" value="InterPro"/>
</dbReference>
<dbReference type="GO" id="GO:0010333">
    <property type="term" value="F:terpene synthase activity"/>
    <property type="evidence" value="ECO:0007669"/>
    <property type="project" value="InterPro"/>
</dbReference>
<dbReference type="GO" id="GO:0016102">
    <property type="term" value="P:diterpenoid biosynthetic process"/>
    <property type="evidence" value="ECO:0007669"/>
    <property type="project" value="InterPro"/>
</dbReference>
<dbReference type="CDD" id="cd00684">
    <property type="entry name" value="Terpene_cyclase_plant_C1"/>
    <property type="match status" value="1"/>
</dbReference>
<dbReference type="FunFam" id="1.50.10.130:FF:000002">
    <property type="entry name" value="Ent-copalyl diphosphate synthase, chloroplastic"/>
    <property type="match status" value="1"/>
</dbReference>
<dbReference type="FunFam" id="1.10.600.10:FF:000005">
    <property type="entry name" value="Ent-kaur-16-ene synthase, chloroplastic"/>
    <property type="match status" value="1"/>
</dbReference>
<dbReference type="Gene3D" id="1.50.10.160">
    <property type="match status" value="1"/>
</dbReference>
<dbReference type="Gene3D" id="1.10.600.10">
    <property type="entry name" value="Farnesyl Diphosphate Synthase"/>
    <property type="match status" value="1"/>
</dbReference>
<dbReference type="Gene3D" id="1.50.10.130">
    <property type="entry name" value="Terpene synthase, N-terminal domain"/>
    <property type="match status" value="1"/>
</dbReference>
<dbReference type="InterPro" id="IPR008949">
    <property type="entry name" value="Isoprenoid_synthase_dom_sf"/>
</dbReference>
<dbReference type="InterPro" id="IPR034741">
    <property type="entry name" value="Terpene_cyclase-like_1_C"/>
</dbReference>
<dbReference type="InterPro" id="IPR044814">
    <property type="entry name" value="Terpene_cyclase_plant_C1"/>
</dbReference>
<dbReference type="InterPro" id="IPR001906">
    <property type="entry name" value="Terpene_synth_N"/>
</dbReference>
<dbReference type="InterPro" id="IPR036965">
    <property type="entry name" value="Terpene_synth_N_sf"/>
</dbReference>
<dbReference type="InterPro" id="IPR050148">
    <property type="entry name" value="Terpene_synthase-like"/>
</dbReference>
<dbReference type="InterPro" id="IPR005630">
    <property type="entry name" value="Terpene_synthase_metal-bd"/>
</dbReference>
<dbReference type="InterPro" id="IPR008930">
    <property type="entry name" value="Terpenoid_cyclase/PrenylTrfase"/>
</dbReference>
<dbReference type="PANTHER" id="PTHR31739:SF25">
    <property type="entry name" value="(E,E)-GERANYLLINALOOL SYNTHASE"/>
    <property type="match status" value="1"/>
</dbReference>
<dbReference type="PANTHER" id="PTHR31739">
    <property type="entry name" value="ENT-COPALYL DIPHOSPHATE SYNTHASE, CHLOROPLASTIC"/>
    <property type="match status" value="1"/>
</dbReference>
<dbReference type="Pfam" id="PF01397">
    <property type="entry name" value="Terpene_synth"/>
    <property type="match status" value="1"/>
</dbReference>
<dbReference type="Pfam" id="PF03936">
    <property type="entry name" value="Terpene_synth_C"/>
    <property type="match status" value="1"/>
</dbReference>
<dbReference type="SFLD" id="SFLDS00005">
    <property type="entry name" value="Isoprenoid_Synthase_Type_I"/>
    <property type="match status" value="1"/>
</dbReference>
<dbReference type="SFLD" id="SFLDG01019">
    <property type="entry name" value="Terpene_Cyclase_Like_1_C_Termi"/>
    <property type="match status" value="1"/>
</dbReference>
<dbReference type="SFLD" id="SFLDG01014">
    <property type="entry name" value="Terpene_Cyclase_Like_1_N-term"/>
    <property type="match status" value="1"/>
</dbReference>
<dbReference type="SFLD" id="SFLDG01605">
    <property type="entry name" value="Terpene_Cyclase_Like_1_N-term"/>
    <property type="match status" value="1"/>
</dbReference>
<dbReference type="SUPFAM" id="SSF48239">
    <property type="entry name" value="Terpenoid cyclases/Protein prenyltransferases"/>
    <property type="match status" value="2"/>
</dbReference>
<dbReference type="SUPFAM" id="SSF48576">
    <property type="entry name" value="Terpenoid synthases"/>
    <property type="match status" value="1"/>
</dbReference>
<keyword id="KW-0150">Chloroplast</keyword>
<keyword id="KW-0413">Isomerase</keyword>
<keyword id="KW-0456">Lyase</keyword>
<keyword id="KW-0460">Magnesium</keyword>
<keyword id="KW-0479">Metal-binding</keyword>
<keyword id="KW-0511">Multifunctional enzyme</keyword>
<keyword id="KW-0934">Plastid</keyword>
<keyword id="KW-0809">Transit peptide</keyword>
<accession>Q675L5</accession>
<evidence type="ECO:0000250" key="1"/>
<evidence type="ECO:0000250" key="2">
    <source>
        <dbReference type="UniProtKB" id="C7BKP9"/>
    </source>
</evidence>
<evidence type="ECO:0000250" key="3">
    <source>
        <dbReference type="UniProtKB" id="Q38802"/>
    </source>
</evidence>
<evidence type="ECO:0000250" key="4">
    <source>
        <dbReference type="UniProtKB" id="Q40577"/>
    </source>
</evidence>
<evidence type="ECO:0000255" key="5"/>
<evidence type="ECO:0000269" key="6">
    <source>
    </source>
</evidence>
<evidence type="ECO:0000305" key="7"/>
<name>TPSD2_PICAB</name>
<gene>
    <name type="primary">TPS-ISO</name>
</gene>
<proteinExistence type="evidence at protein level"/>
<reference key="1">
    <citation type="journal article" date="2004" name="Plant Physiol.">
        <title>Functional characterization of nine Norway Spruce TPS genes and evolution of gymnosperm terpene synthases of the TPS-d subfamily.</title>
        <authorList>
            <person name="Martin D.M."/>
            <person name="Faeldt J."/>
            <person name="Bohlmann J."/>
        </authorList>
    </citation>
    <scope>NUCLEOTIDE SEQUENCE [MRNA]</scope>
    <scope>FUNCTION</scope>
    <scope>CATALYTIC ACTIVITY</scope>
    <scope>GENE FAMILY</scope>
    <scope>NOMENCLATURE</scope>
</reference>
<reference key="2">
    <citation type="submission" date="2005-10" db="EMBL/GenBank/DDBJ databases">
        <authorList>
            <person name="Martin D.M."/>
            <person name="Keeling C."/>
            <person name="Bohlmann J."/>
        </authorList>
    </citation>
    <scope>SEQUENCE REVISION</scope>
</reference>
<protein>
    <recommendedName>
        <fullName>Bifunctional isopimaradiene synthase, chloroplastic</fullName>
    </recommendedName>
    <alternativeName>
        <fullName>Diterpene synthase</fullName>
    </alternativeName>
    <alternativeName>
        <fullName>PaTPS-Iso</fullName>
    </alternativeName>
    <domain>
        <recommendedName>
            <fullName>Isopimara-7,15-diene synthase</fullName>
            <shortName>Isopimaradiene synthase</shortName>
            <ecNumber>4.2.3.44</ecNumber>
        </recommendedName>
    </domain>
    <domain>
        <recommendedName>
            <fullName>Copalyl diphosphate synthase</fullName>
            <ecNumber>5.5.1.12</ecNumber>
        </recommendedName>
    </domain>
</protein>
<sequence>MALLSSSLSSQIPTGSHPLTHTQCIPHFSTTINAGISAGKPRSFYLRWGKGSNKIIACVGEGTTSLPYQSAEKTDSLSAPTLVKREFPPGFWKDHVIDSLTSSHKVSAAEEKRMETLISEIKNIFRSMGYGETNPSAYDTAWVARIPAVDGSEHPEFPETLEWILQNQLKDGSWGEGFYFLAYDRILATLACIITLTLWRTGETQIRKGIEFFKTQAGKIEDEADSHRPSGFEIVFPAMLKEAKVLGLDLPYELPFIKQIIEKREAKLERLPTNILYALPTTLLYSLEGLQEIVDWEKIIKLQSKDGSFLTSPASTAAVFMRTGNKKCLEFLNFVLKKFGNHVPCHYPLDLFERLWAVDTVERLGIDHHFKEEIKDALDYVYSHWDERGIGWARENPIPDIDDTAMGLRILRLHGYNVSSDVLKTFRDENGEFFCFLGQTQRGVTDMLNVNRCSHVAFPGETIMQEAKLCTERYLRNALEDVGAFDKWALKKNIRGEVEYALKYPWHRSMPRLEARSYIEHYGPNDVWLGKTMYMMPYISNLKYLELAKLDFNHVQSLHQKELRDLRRWWKSSGLSELKFTRERVTEIYFSAASFIFEPEFATCRDVYTKISIFTVILDDLYDAHGTLDNLELFSEGVKRWDLSLVDRMPQDMKICFTVLYNTVNEIAVEGRKRQGRDVLGYIRNVLEILLAAHTKEAEWSAARYVPSFDEYIENASVSISLGTLVLISVLFTGEILTDDVLSKIGRGSRFLQLMGLTGRLVNDTKTYEAERGQGEVASAVQCYMKEHPEISEEEALKHVYTVMENALDELNREFVNNRDVPDSCRRLVFETARIMQLFYMEGDGLTLSHEMEIKEHVKNCLFQPVA</sequence>
<comment type="function">
    <text evidence="1 6">Involved in defensive oleoresin formation in conifers in response to insect attack or other injury (By similarity). Involved in diterpene (C20) olefins biosynthesis. Bifunctional enzyme that catalyzes two sequential cyclizations of geranylgeranyl diphosphate (GGPP) to isopimara-7,15-diene.</text>
</comment>
<comment type="catalytic activity">
    <reaction evidence="6">
        <text>(2E,6E,10E)-geranylgeranyl diphosphate = (+)-copalyl diphosphate</text>
        <dbReference type="Rhea" id="RHEA:24316"/>
        <dbReference type="ChEBI" id="CHEBI:58635"/>
        <dbReference type="ChEBI" id="CHEBI:58756"/>
        <dbReference type="EC" id="5.5.1.12"/>
    </reaction>
</comment>
<comment type="catalytic activity">
    <reaction evidence="6">
        <text>(+)-copalyl diphosphate = isopimara-7,15-diene + diphosphate</text>
        <dbReference type="Rhea" id="RHEA:26128"/>
        <dbReference type="ChEBI" id="CHEBI:33019"/>
        <dbReference type="ChEBI" id="CHEBI:52280"/>
        <dbReference type="ChEBI" id="CHEBI:58635"/>
        <dbReference type="EC" id="4.2.3.44"/>
    </reaction>
</comment>
<comment type="cofactor">
    <cofactor evidence="4">
        <name>Mg(2+)</name>
        <dbReference type="ChEBI" id="CHEBI:18420"/>
    </cofactor>
    <text evidence="4">Binds 3 Mg(2+) ions per subunit.</text>
</comment>
<comment type="pathway">
    <text>Terpene metabolism; oleoresin biosynthesis.</text>
</comment>
<comment type="subcellular location">
    <subcellularLocation>
        <location evidence="1">Plastid</location>
        <location evidence="1">Chloroplast</location>
    </subcellularLocation>
</comment>
<comment type="domain">
    <text evidence="7">The Asp-Xaa-Asp-Asp (DXDD) motif is important for the catalytic activity in the class II active site relevant for the cyclization of GGPP. The Asp-Asp-Xaa-Xaa-Asp/Glu (DDXXD/E) motif is important for the catalytic activity in the class I active site, presumably through binding to Mg(2+).</text>
</comment>
<comment type="similarity">
    <text evidence="7">Belongs to the terpene synthase family. Tpsd subfamily.</text>
</comment>